<comment type="function">
    <text evidence="1">Catalyzes the addition and repair of the essential 3'-terminal CCA sequence in tRNAs without using a nucleic acid template. Adds these three nucleotides in the order of C, C, and A to the tRNA nucleotide-73, using CTP and ATP as substrates and producing inorganic pyrophosphate. tRNA 3'-terminal CCA addition is required both for tRNA processing and repair. Also involved in tRNA surveillance by mediating tandem CCA addition to generate a CCACCA at the 3' terminus of unstable tRNAs. While stable tRNAs receive only 3'-terminal CCA, unstable tRNAs are marked with CCACCA and rapidly degraded.</text>
</comment>
<comment type="catalytic activity">
    <reaction evidence="1">
        <text>a tRNA precursor + 2 CTP + ATP = a tRNA with a 3' CCA end + 3 diphosphate</text>
        <dbReference type="Rhea" id="RHEA:14433"/>
        <dbReference type="Rhea" id="RHEA-COMP:10465"/>
        <dbReference type="Rhea" id="RHEA-COMP:10468"/>
        <dbReference type="ChEBI" id="CHEBI:30616"/>
        <dbReference type="ChEBI" id="CHEBI:33019"/>
        <dbReference type="ChEBI" id="CHEBI:37563"/>
        <dbReference type="ChEBI" id="CHEBI:74896"/>
        <dbReference type="ChEBI" id="CHEBI:83071"/>
        <dbReference type="EC" id="2.7.7.72"/>
    </reaction>
</comment>
<comment type="catalytic activity">
    <reaction evidence="1">
        <text>a tRNA with a 3' CCA end + 2 CTP + ATP = a tRNA with a 3' CCACCA end + 3 diphosphate</text>
        <dbReference type="Rhea" id="RHEA:76235"/>
        <dbReference type="Rhea" id="RHEA-COMP:10468"/>
        <dbReference type="Rhea" id="RHEA-COMP:18655"/>
        <dbReference type="ChEBI" id="CHEBI:30616"/>
        <dbReference type="ChEBI" id="CHEBI:33019"/>
        <dbReference type="ChEBI" id="CHEBI:37563"/>
        <dbReference type="ChEBI" id="CHEBI:83071"/>
        <dbReference type="ChEBI" id="CHEBI:195187"/>
    </reaction>
    <physiologicalReaction direction="left-to-right" evidence="1">
        <dbReference type="Rhea" id="RHEA:76236"/>
    </physiologicalReaction>
</comment>
<comment type="cofactor">
    <cofactor evidence="1">
        <name>Mg(2+)</name>
        <dbReference type="ChEBI" id="CHEBI:18420"/>
    </cofactor>
</comment>
<comment type="subunit">
    <text evidence="1">Homodimer.</text>
</comment>
<comment type="miscellaneous">
    <text evidence="1">A single active site specifically recognizes both ATP and CTP and is responsible for their addition.</text>
</comment>
<comment type="similarity">
    <text evidence="1">Belongs to the tRNA nucleotidyltransferase/poly(A) polymerase family. Bacterial CCA-adding enzyme type 3 subfamily.</text>
</comment>
<keyword id="KW-0067">ATP-binding</keyword>
<keyword id="KW-0460">Magnesium</keyword>
<keyword id="KW-0479">Metal-binding</keyword>
<keyword id="KW-0547">Nucleotide-binding</keyword>
<keyword id="KW-0548">Nucleotidyltransferase</keyword>
<keyword id="KW-1185">Reference proteome</keyword>
<keyword id="KW-0692">RNA repair</keyword>
<keyword id="KW-0694">RNA-binding</keyword>
<keyword id="KW-0808">Transferase</keyword>
<keyword id="KW-0819">tRNA processing</keyword>
<sequence length="397" mass="44314">MKLTTFAPEFAEALPILEQIEAAGFEAYFVGGSVRDNLLGLPIHDVDIATSAYPAEIKQIFKRTVDTGIQHGTVMILDHGNGYEVTTFRTETGYQDFRRPDSVTFVRSLEEDLKRRDFTINALAMRADGEIIDLFDGIADLKAHKIRAVGVADERFHEDALRMMRAVRFESQLGFSVTETTQAAIEKHAALLEKIAIERIHVEFMKLMQGIERQNGLRTFIDTGLYRYCPDLADQLLALERLTALPTEQLHDESAVWLVVTYLLGQTPAQAGRFLKHWKSANDVIDAVKAGLVLLPKLLTATADQWDLYQAGQAVLVISLQIAQMVTTATIPTADWLERYDRLQIKQKADLAINGQILMQNGFQPGPILGKALAILERKVVLDELPNTTEALLKAAK</sequence>
<name>CCA_LATSS</name>
<feature type="chain" id="PRO_1000054329" description="CCA-adding enzyme">
    <location>
        <begin position="1"/>
        <end position="397"/>
    </location>
</feature>
<feature type="binding site" evidence="1">
    <location>
        <position position="32"/>
    </location>
    <ligand>
        <name>ATP</name>
        <dbReference type="ChEBI" id="CHEBI:30616"/>
    </ligand>
</feature>
<feature type="binding site" evidence="1">
    <location>
        <position position="32"/>
    </location>
    <ligand>
        <name>CTP</name>
        <dbReference type="ChEBI" id="CHEBI:37563"/>
    </ligand>
</feature>
<feature type="binding site" evidence="1">
    <location>
        <position position="35"/>
    </location>
    <ligand>
        <name>ATP</name>
        <dbReference type="ChEBI" id="CHEBI:30616"/>
    </ligand>
</feature>
<feature type="binding site" evidence="1">
    <location>
        <position position="35"/>
    </location>
    <ligand>
        <name>CTP</name>
        <dbReference type="ChEBI" id="CHEBI:37563"/>
    </ligand>
</feature>
<feature type="binding site" evidence="1">
    <location>
        <position position="45"/>
    </location>
    <ligand>
        <name>Mg(2+)</name>
        <dbReference type="ChEBI" id="CHEBI:18420"/>
    </ligand>
</feature>
<feature type="binding site" evidence="1">
    <location>
        <position position="47"/>
    </location>
    <ligand>
        <name>Mg(2+)</name>
        <dbReference type="ChEBI" id="CHEBI:18420"/>
    </ligand>
</feature>
<feature type="binding site" evidence="1">
    <location>
        <position position="116"/>
    </location>
    <ligand>
        <name>ATP</name>
        <dbReference type="ChEBI" id="CHEBI:30616"/>
    </ligand>
</feature>
<feature type="binding site" evidence="1">
    <location>
        <position position="116"/>
    </location>
    <ligand>
        <name>CTP</name>
        <dbReference type="ChEBI" id="CHEBI:37563"/>
    </ligand>
</feature>
<feature type="binding site" evidence="1">
    <location>
        <position position="159"/>
    </location>
    <ligand>
        <name>ATP</name>
        <dbReference type="ChEBI" id="CHEBI:30616"/>
    </ligand>
</feature>
<feature type="binding site" evidence="1">
    <location>
        <position position="159"/>
    </location>
    <ligand>
        <name>CTP</name>
        <dbReference type="ChEBI" id="CHEBI:37563"/>
    </ligand>
</feature>
<feature type="binding site" evidence="1">
    <location>
        <position position="162"/>
    </location>
    <ligand>
        <name>ATP</name>
        <dbReference type="ChEBI" id="CHEBI:30616"/>
    </ligand>
</feature>
<feature type="binding site" evidence="1">
    <location>
        <position position="162"/>
    </location>
    <ligand>
        <name>CTP</name>
        <dbReference type="ChEBI" id="CHEBI:37563"/>
    </ligand>
</feature>
<feature type="binding site" evidence="1">
    <location>
        <position position="165"/>
    </location>
    <ligand>
        <name>ATP</name>
        <dbReference type="ChEBI" id="CHEBI:30616"/>
    </ligand>
</feature>
<feature type="binding site" evidence="1">
    <location>
        <position position="165"/>
    </location>
    <ligand>
        <name>CTP</name>
        <dbReference type="ChEBI" id="CHEBI:37563"/>
    </ligand>
</feature>
<feature type="binding site" evidence="1">
    <location>
        <position position="168"/>
    </location>
    <ligand>
        <name>ATP</name>
        <dbReference type="ChEBI" id="CHEBI:30616"/>
    </ligand>
</feature>
<feature type="binding site" evidence="1">
    <location>
        <position position="168"/>
    </location>
    <ligand>
        <name>CTP</name>
        <dbReference type="ChEBI" id="CHEBI:37563"/>
    </ligand>
</feature>
<proteinExistence type="inferred from homology"/>
<gene>
    <name evidence="1" type="primary">cca</name>
    <name type="ordered locus">LCA_1004</name>
</gene>
<dbReference type="EC" id="2.7.7.72" evidence="1"/>
<dbReference type="EMBL" id="CR936503">
    <property type="protein sequence ID" value="CAI55306.1"/>
    <property type="molecule type" value="Genomic_DNA"/>
</dbReference>
<dbReference type="RefSeq" id="WP_011374706.1">
    <property type="nucleotide sequence ID" value="NC_007576.1"/>
</dbReference>
<dbReference type="SMR" id="Q38WX5"/>
<dbReference type="STRING" id="314315.LCA_1004"/>
<dbReference type="KEGG" id="lsa:LCA_1004"/>
<dbReference type="eggNOG" id="COG0617">
    <property type="taxonomic scope" value="Bacteria"/>
</dbReference>
<dbReference type="HOGENOM" id="CLU_015961_3_1_9"/>
<dbReference type="OrthoDB" id="9805698at2"/>
<dbReference type="Proteomes" id="UP000002707">
    <property type="component" value="Chromosome"/>
</dbReference>
<dbReference type="GO" id="GO:0005524">
    <property type="term" value="F:ATP binding"/>
    <property type="evidence" value="ECO:0007669"/>
    <property type="project" value="UniProtKB-UniRule"/>
</dbReference>
<dbReference type="GO" id="GO:0004810">
    <property type="term" value="F:CCA tRNA nucleotidyltransferase activity"/>
    <property type="evidence" value="ECO:0007669"/>
    <property type="project" value="UniProtKB-UniRule"/>
</dbReference>
<dbReference type="GO" id="GO:0000287">
    <property type="term" value="F:magnesium ion binding"/>
    <property type="evidence" value="ECO:0007669"/>
    <property type="project" value="UniProtKB-UniRule"/>
</dbReference>
<dbReference type="GO" id="GO:0000049">
    <property type="term" value="F:tRNA binding"/>
    <property type="evidence" value="ECO:0007669"/>
    <property type="project" value="UniProtKB-UniRule"/>
</dbReference>
<dbReference type="GO" id="GO:0042245">
    <property type="term" value="P:RNA repair"/>
    <property type="evidence" value="ECO:0007669"/>
    <property type="project" value="UniProtKB-KW"/>
</dbReference>
<dbReference type="GO" id="GO:0001680">
    <property type="term" value="P:tRNA 3'-terminal CCA addition"/>
    <property type="evidence" value="ECO:0007669"/>
    <property type="project" value="UniProtKB-UniRule"/>
</dbReference>
<dbReference type="CDD" id="cd05398">
    <property type="entry name" value="NT_ClassII-CCAase"/>
    <property type="match status" value="1"/>
</dbReference>
<dbReference type="Gene3D" id="1.10.110.30">
    <property type="match status" value="1"/>
</dbReference>
<dbReference type="Gene3D" id="1.10.246.80">
    <property type="match status" value="1"/>
</dbReference>
<dbReference type="Gene3D" id="1.20.58.560">
    <property type="match status" value="1"/>
</dbReference>
<dbReference type="Gene3D" id="3.30.460.10">
    <property type="entry name" value="Beta Polymerase, domain 2"/>
    <property type="match status" value="1"/>
</dbReference>
<dbReference type="HAMAP" id="MF_01263">
    <property type="entry name" value="CCA_bact_type3"/>
    <property type="match status" value="1"/>
</dbReference>
<dbReference type="InterPro" id="IPR050264">
    <property type="entry name" value="Bact_CCA-adding_enz_type3_sf"/>
</dbReference>
<dbReference type="InterPro" id="IPR032810">
    <property type="entry name" value="CCA-adding_enz_C"/>
</dbReference>
<dbReference type="InterPro" id="IPR023068">
    <property type="entry name" value="CCA-adding_enz_firmicutes"/>
</dbReference>
<dbReference type="InterPro" id="IPR043519">
    <property type="entry name" value="NT_sf"/>
</dbReference>
<dbReference type="InterPro" id="IPR002646">
    <property type="entry name" value="PolA_pol_head_dom"/>
</dbReference>
<dbReference type="InterPro" id="IPR032828">
    <property type="entry name" value="PolyA_RNA-bd"/>
</dbReference>
<dbReference type="NCBIfam" id="NF009814">
    <property type="entry name" value="PRK13299.1"/>
    <property type="match status" value="1"/>
</dbReference>
<dbReference type="PANTHER" id="PTHR46173">
    <property type="entry name" value="CCA TRNA NUCLEOTIDYLTRANSFERASE 1, MITOCHONDRIAL"/>
    <property type="match status" value="1"/>
</dbReference>
<dbReference type="PANTHER" id="PTHR46173:SF1">
    <property type="entry name" value="CCA TRNA NUCLEOTIDYLTRANSFERASE 1, MITOCHONDRIAL"/>
    <property type="match status" value="1"/>
</dbReference>
<dbReference type="Pfam" id="PF01743">
    <property type="entry name" value="PolyA_pol"/>
    <property type="match status" value="1"/>
</dbReference>
<dbReference type="Pfam" id="PF12627">
    <property type="entry name" value="PolyA_pol_RNAbd"/>
    <property type="match status" value="1"/>
</dbReference>
<dbReference type="Pfam" id="PF13735">
    <property type="entry name" value="tRNA_NucTran2_2"/>
    <property type="match status" value="1"/>
</dbReference>
<dbReference type="SUPFAM" id="SSF81301">
    <property type="entry name" value="Nucleotidyltransferase"/>
    <property type="match status" value="1"/>
</dbReference>
<dbReference type="SUPFAM" id="SSF81891">
    <property type="entry name" value="Poly A polymerase C-terminal region-like"/>
    <property type="match status" value="1"/>
</dbReference>
<evidence type="ECO:0000255" key="1">
    <source>
        <dbReference type="HAMAP-Rule" id="MF_01263"/>
    </source>
</evidence>
<reference key="1">
    <citation type="journal article" date="2005" name="Nat. Biotechnol.">
        <title>The complete genome sequence of the meat-borne lactic acid bacterium Lactobacillus sakei 23K.</title>
        <authorList>
            <person name="Chaillou S."/>
            <person name="Champomier-Verges M.-C."/>
            <person name="Cornet M."/>
            <person name="Crutz-Le Coq A.-M."/>
            <person name="Dudez A.-M."/>
            <person name="Martin V."/>
            <person name="Beaufils S."/>
            <person name="Darbon-Rongere E."/>
            <person name="Bossy R."/>
            <person name="Loux V."/>
            <person name="Zagorec M."/>
        </authorList>
    </citation>
    <scope>NUCLEOTIDE SEQUENCE [LARGE SCALE GENOMIC DNA]</scope>
    <source>
        <strain>23K</strain>
    </source>
</reference>
<accession>Q38WX5</accession>
<organism>
    <name type="scientific">Latilactobacillus sakei subsp. sakei (strain 23K)</name>
    <name type="common">Lactobacillus sakei subsp. sakei</name>
    <dbReference type="NCBI Taxonomy" id="314315"/>
    <lineage>
        <taxon>Bacteria</taxon>
        <taxon>Bacillati</taxon>
        <taxon>Bacillota</taxon>
        <taxon>Bacilli</taxon>
        <taxon>Lactobacillales</taxon>
        <taxon>Lactobacillaceae</taxon>
        <taxon>Latilactobacillus</taxon>
    </lineage>
</organism>
<protein>
    <recommendedName>
        <fullName evidence="1">CCA-adding enzyme</fullName>
        <ecNumber evidence="1">2.7.7.72</ecNumber>
    </recommendedName>
    <alternativeName>
        <fullName evidence="1">CCA tRNA nucleotidyltransferase</fullName>
    </alternativeName>
    <alternativeName>
        <fullName evidence="1">tRNA CCA-pyrophosphorylase</fullName>
    </alternativeName>
    <alternativeName>
        <fullName evidence="1">tRNA adenylyl-/cytidylyl- transferase</fullName>
    </alternativeName>
    <alternativeName>
        <fullName evidence="1">tRNA nucleotidyltransferase</fullName>
    </alternativeName>
    <alternativeName>
        <fullName evidence="1">tRNA-NT</fullName>
    </alternativeName>
</protein>